<dbReference type="EC" id="3.4.21.6"/>
<dbReference type="EMBL" id="DQ917519">
    <property type="protein sequence ID" value="ABK63548.1"/>
    <property type="molecule type" value="mRNA"/>
</dbReference>
<dbReference type="SMR" id="A6MFK8"/>
<dbReference type="MEROPS" id="S01.396"/>
<dbReference type="GO" id="GO:0005576">
    <property type="term" value="C:extracellular region"/>
    <property type="evidence" value="ECO:0000250"/>
    <property type="project" value="UniProtKB"/>
</dbReference>
<dbReference type="GO" id="GO:0005615">
    <property type="term" value="C:extracellular space"/>
    <property type="evidence" value="ECO:0007669"/>
    <property type="project" value="TreeGrafter"/>
</dbReference>
<dbReference type="GO" id="GO:0005509">
    <property type="term" value="F:calcium ion binding"/>
    <property type="evidence" value="ECO:0007669"/>
    <property type="project" value="InterPro"/>
</dbReference>
<dbReference type="GO" id="GO:0016504">
    <property type="term" value="F:peptidase activator activity"/>
    <property type="evidence" value="ECO:0007669"/>
    <property type="project" value="UniProtKB-KW"/>
</dbReference>
<dbReference type="GO" id="GO:0004252">
    <property type="term" value="F:serine-type endopeptidase activity"/>
    <property type="evidence" value="ECO:0000250"/>
    <property type="project" value="UniProtKB"/>
</dbReference>
<dbReference type="GO" id="GO:0090729">
    <property type="term" value="F:toxin activity"/>
    <property type="evidence" value="ECO:0007669"/>
    <property type="project" value="UniProtKB-KW"/>
</dbReference>
<dbReference type="GO" id="GO:0007596">
    <property type="term" value="P:blood coagulation"/>
    <property type="evidence" value="ECO:0007669"/>
    <property type="project" value="InterPro"/>
</dbReference>
<dbReference type="GO" id="GO:0035807">
    <property type="term" value="P:induction of blood coagulation in another organism"/>
    <property type="evidence" value="ECO:0007669"/>
    <property type="project" value="UniProtKB-ARBA"/>
</dbReference>
<dbReference type="GO" id="GO:0006508">
    <property type="term" value="P:proteolysis"/>
    <property type="evidence" value="ECO:0007669"/>
    <property type="project" value="UniProtKB-KW"/>
</dbReference>
<dbReference type="GO" id="GO:0044469">
    <property type="term" value="P:venom-mediated blood coagulation"/>
    <property type="evidence" value="ECO:0000250"/>
    <property type="project" value="UniProtKB"/>
</dbReference>
<dbReference type="CDD" id="cd00054">
    <property type="entry name" value="EGF_CA"/>
    <property type="match status" value="1"/>
</dbReference>
<dbReference type="CDD" id="cd00190">
    <property type="entry name" value="Tryp_SPc"/>
    <property type="match status" value="1"/>
</dbReference>
<dbReference type="FunFam" id="2.10.25.10:FF:000513">
    <property type="entry name" value="Coagulation factor VII"/>
    <property type="match status" value="1"/>
</dbReference>
<dbReference type="FunFam" id="2.40.10.10:FF:000013">
    <property type="entry name" value="Coagulation factor X"/>
    <property type="match status" value="1"/>
</dbReference>
<dbReference type="FunFam" id="2.10.25.10:FF:000162">
    <property type="entry name" value="Coagulation factor X (Predicted)"/>
    <property type="match status" value="1"/>
</dbReference>
<dbReference type="FunFam" id="4.10.740.10:FF:000001">
    <property type="entry name" value="vitamin K-dependent protein S"/>
    <property type="match status" value="1"/>
</dbReference>
<dbReference type="Gene3D" id="4.10.740.10">
    <property type="entry name" value="Coagulation Factor IX"/>
    <property type="match status" value="1"/>
</dbReference>
<dbReference type="Gene3D" id="2.10.25.10">
    <property type="entry name" value="Laminin"/>
    <property type="match status" value="2"/>
</dbReference>
<dbReference type="Gene3D" id="2.40.10.10">
    <property type="entry name" value="Trypsin-like serine proteases"/>
    <property type="match status" value="2"/>
</dbReference>
<dbReference type="InterPro" id="IPR017857">
    <property type="entry name" value="Coagulation_fac-like_Gla_dom"/>
</dbReference>
<dbReference type="InterPro" id="IPR001881">
    <property type="entry name" value="EGF-like_Ca-bd_dom"/>
</dbReference>
<dbReference type="InterPro" id="IPR000742">
    <property type="entry name" value="EGF-like_dom"/>
</dbReference>
<dbReference type="InterPro" id="IPR000152">
    <property type="entry name" value="EGF-type_Asp/Asn_hydroxyl_site"/>
</dbReference>
<dbReference type="InterPro" id="IPR018097">
    <property type="entry name" value="EGF_Ca-bd_CS"/>
</dbReference>
<dbReference type="InterPro" id="IPR035972">
    <property type="entry name" value="GLA-like_dom_SF"/>
</dbReference>
<dbReference type="InterPro" id="IPR000294">
    <property type="entry name" value="GLA_domain"/>
</dbReference>
<dbReference type="InterPro" id="IPR012224">
    <property type="entry name" value="Pept_S1A_FX"/>
</dbReference>
<dbReference type="InterPro" id="IPR050442">
    <property type="entry name" value="Peptidase_S1_coag_factors"/>
</dbReference>
<dbReference type="InterPro" id="IPR009003">
    <property type="entry name" value="Peptidase_S1_PA"/>
</dbReference>
<dbReference type="InterPro" id="IPR043504">
    <property type="entry name" value="Peptidase_S1_PA_chymotrypsin"/>
</dbReference>
<dbReference type="InterPro" id="IPR001314">
    <property type="entry name" value="Peptidase_S1A"/>
</dbReference>
<dbReference type="InterPro" id="IPR001254">
    <property type="entry name" value="Trypsin_dom"/>
</dbReference>
<dbReference type="InterPro" id="IPR018114">
    <property type="entry name" value="TRYPSIN_HIS"/>
</dbReference>
<dbReference type="InterPro" id="IPR033116">
    <property type="entry name" value="TRYPSIN_SER"/>
</dbReference>
<dbReference type="PANTHER" id="PTHR24278">
    <property type="entry name" value="COAGULATION FACTOR"/>
    <property type="match status" value="1"/>
</dbReference>
<dbReference type="PANTHER" id="PTHR24278:SF28">
    <property type="entry name" value="COAGULATION FACTOR X"/>
    <property type="match status" value="1"/>
</dbReference>
<dbReference type="Pfam" id="PF00008">
    <property type="entry name" value="EGF"/>
    <property type="match status" value="1"/>
</dbReference>
<dbReference type="Pfam" id="PF14670">
    <property type="entry name" value="FXa_inhibition"/>
    <property type="match status" value="1"/>
</dbReference>
<dbReference type="Pfam" id="PF00594">
    <property type="entry name" value="Gla"/>
    <property type="match status" value="1"/>
</dbReference>
<dbReference type="Pfam" id="PF00089">
    <property type="entry name" value="Trypsin"/>
    <property type="match status" value="1"/>
</dbReference>
<dbReference type="PIRSF" id="PIRSF001143">
    <property type="entry name" value="Factor_X"/>
    <property type="match status" value="1"/>
</dbReference>
<dbReference type="PRINTS" id="PR00722">
    <property type="entry name" value="CHYMOTRYPSIN"/>
</dbReference>
<dbReference type="PRINTS" id="PR00010">
    <property type="entry name" value="EGFBLOOD"/>
</dbReference>
<dbReference type="PRINTS" id="PR00001">
    <property type="entry name" value="GLABLOOD"/>
</dbReference>
<dbReference type="SMART" id="SM00181">
    <property type="entry name" value="EGF"/>
    <property type="match status" value="2"/>
</dbReference>
<dbReference type="SMART" id="SM00179">
    <property type="entry name" value="EGF_CA"/>
    <property type="match status" value="1"/>
</dbReference>
<dbReference type="SMART" id="SM00069">
    <property type="entry name" value="GLA"/>
    <property type="match status" value="1"/>
</dbReference>
<dbReference type="SMART" id="SM00020">
    <property type="entry name" value="Tryp_SPc"/>
    <property type="match status" value="1"/>
</dbReference>
<dbReference type="SUPFAM" id="SSF57630">
    <property type="entry name" value="GLA-domain"/>
    <property type="match status" value="1"/>
</dbReference>
<dbReference type="SUPFAM" id="SSF50494">
    <property type="entry name" value="Trypsin-like serine proteases"/>
    <property type="match status" value="1"/>
</dbReference>
<dbReference type="PROSITE" id="PS00010">
    <property type="entry name" value="ASX_HYDROXYL"/>
    <property type="match status" value="1"/>
</dbReference>
<dbReference type="PROSITE" id="PS00022">
    <property type="entry name" value="EGF_1"/>
    <property type="match status" value="1"/>
</dbReference>
<dbReference type="PROSITE" id="PS01186">
    <property type="entry name" value="EGF_2"/>
    <property type="match status" value="2"/>
</dbReference>
<dbReference type="PROSITE" id="PS50026">
    <property type="entry name" value="EGF_3"/>
    <property type="match status" value="1"/>
</dbReference>
<dbReference type="PROSITE" id="PS01187">
    <property type="entry name" value="EGF_CA"/>
    <property type="match status" value="1"/>
</dbReference>
<dbReference type="PROSITE" id="PS00011">
    <property type="entry name" value="GLA_1"/>
    <property type="match status" value="1"/>
</dbReference>
<dbReference type="PROSITE" id="PS50998">
    <property type="entry name" value="GLA_2"/>
    <property type="match status" value="1"/>
</dbReference>
<dbReference type="PROSITE" id="PS50240">
    <property type="entry name" value="TRYPSIN_DOM"/>
    <property type="match status" value="1"/>
</dbReference>
<dbReference type="PROSITE" id="PS00134">
    <property type="entry name" value="TRYPSIN_HIS"/>
    <property type="match status" value="1"/>
</dbReference>
<dbReference type="PROSITE" id="PS00135">
    <property type="entry name" value="TRYPSIN_SER"/>
    <property type="match status" value="1"/>
</dbReference>
<name>FAXD2_DEMVE</name>
<accession>A6MFK8</accession>
<protein>
    <recommendedName>
        <fullName>Venom prothrombin activator vestarin-D2</fullName>
        <shortName>vPA</shortName>
        <ecNumber>3.4.21.6</ecNumber>
    </recommendedName>
    <alternativeName>
        <fullName>Venom coagulation factor Xa-like protease</fullName>
    </alternativeName>
    <component>
        <recommendedName>
            <fullName>Vestarin-D2 light chain</fullName>
        </recommendedName>
    </component>
    <component>
        <recommendedName>
            <fullName>Vestarin-D2 heavy chain</fullName>
        </recommendedName>
    </component>
</protein>
<proteinExistence type="evidence at protein level"/>
<reference key="1">
    <citation type="journal article" date="2007" name="J. Proteome Res.">
        <title>Diversity of toxic components from the venom of the evolutionarily distinct black whip snake, Demansia vestigiata.</title>
        <authorList>
            <person name="St Pierre L."/>
            <person name="Birrell G.W."/>
            <person name="Earl S.T.H."/>
            <person name="Wallis T.P."/>
            <person name="Gorman J.J."/>
            <person name="de Jersey J."/>
            <person name="Masci P.P."/>
            <person name="Lavin M.F."/>
        </authorList>
    </citation>
    <scope>NUCLEOTIDE SEQUENCE [MRNA]</scope>
    <scope>PROTEIN SEQUENCE OF 134-140; 346-357 AND 390-403</scope>
    <scope>SUBCELLULAR LOCATION</scope>
    <scope>TISSUE SPECIFICITY</scope>
    <scope>IDENTIFICATION BY MASS SPECTROMETRY</scope>
    <source>
        <tissue>Venom</tissue>
        <tissue>Venom gland</tissue>
    </source>
</reference>
<reference key="2">
    <citation type="journal article" date="2001" name="Thromb. Haemost.">
        <title>Classification and nomenclature of prothrombin activators isolated from snake venoms.</title>
        <authorList>
            <person name="Manjunatha Kini R."/>
            <person name="Morita T."/>
            <person name="Rosing J."/>
        </authorList>
    </citation>
    <scope>NOMENCLATURE</scope>
</reference>
<evidence type="ECO:0000250" key="1"/>
<evidence type="ECO:0000255" key="2"/>
<evidence type="ECO:0000255" key="3">
    <source>
        <dbReference type="PROSITE-ProRule" id="PRU00076"/>
    </source>
</evidence>
<evidence type="ECO:0000255" key="4">
    <source>
        <dbReference type="PROSITE-ProRule" id="PRU00274"/>
    </source>
</evidence>
<evidence type="ECO:0000255" key="5">
    <source>
        <dbReference type="PROSITE-ProRule" id="PRU00463"/>
    </source>
</evidence>
<evidence type="ECO:0000269" key="6">
    <source>
    </source>
</evidence>
<evidence type="ECO:0000305" key="7"/>
<organism>
    <name type="scientific">Demansia vestigiata</name>
    <name type="common">Lesser black whip snake</name>
    <name type="synonym">Demansia atra</name>
    <dbReference type="NCBI Taxonomy" id="412038"/>
    <lineage>
        <taxon>Eukaryota</taxon>
        <taxon>Metazoa</taxon>
        <taxon>Chordata</taxon>
        <taxon>Craniata</taxon>
        <taxon>Vertebrata</taxon>
        <taxon>Euteleostomi</taxon>
        <taxon>Lepidosauria</taxon>
        <taxon>Squamata</taxon>
        <taxon>Bifurcata</taxon>
        <taxon>Unidentata</taxon>
        <taxon>Episquamata</taxon>
        <taxon>Toxicofera</taxon>
        <taxon>Serpentes</taxon>
        <taxon>Colubroidea</taxon>
        <taxon>Elapidae</taxon>
        <taxon>Notechinae</taxon>
        <taxon>Demansia</taxon>
    </lineage>
</organism>
<sequence length="471" mass="52681">MAPQLLLCLILTFLWSLPEAESNVFLKSNVANRFLQRTKRANSIFEEIRPGNIERECVEEKCSKEEAREVFQDNEKTEAFWTVYVDGDQCLSNPCHYRGTCKDGIGSYTCTCLPGYEGKNCEHVVVKSCRLFNGNCWHFCKTVQNDTQCSCAEGYRLGVDGFSCIAEGDFSCGRIIKSRNKREASLPDFHFSDDYDAIDENNLVETVQSQSATLLKKSDNPSPDIRIVSGLDCKLGECPWQAVLIDEHGKAFGGGTILSPYFVLTAAHCLNQTKSIAVVVGQVDISRKETRHLLHVDKAYMHSKYVRATYDHDIAILRLRTPIQFSENVVPACLPTADFADEVLMKQDFGIVSGFGRLHERGSTSDILKVIRVPYVDRYTCMLSSNYRITPSMFCAGYGNQPQDACQGDSGGPHITAYGDTHFITGIISWGEGCGRKGKYGIYTKVSNFIPWIKTIMRRNQPSTESSTGRL</sequence>
<keyword id="KW-1204">Blood coagulation cascade activating toxin</keyword>
<keyword id="KW-0106">Calcium</keyword>
<keyword id="KW-0165">Cleavage on pair of basic residues</keyword>
<keyword id="KW-0903">Direct protein sequencing</keyword>
<keyword id="KW-1015">Disulfide bond</keyword>
<keyword id="KW-0245">EGF-like domain</keyword>
<keyword id="KW-0301">Gamma-carboxyglutamic acid</keyword>
<keyword id="KW-0325">Glycoprotein</keyword>
<keyword id="KW-1199">Hemostasis impairing toxin</keyword>
<keyword id="KW-0378">Hydrolase</keyword>
<keyword id="KW-0645">Protease</keyword>
<keyword id="KW-0655">Prothrombin activator</keyword>
<keyword id="KW-0677">Repeat</keyword>
<keyword id="KW-0964">Secreted</keyword>
<keyword id="KW-0720">Serine protease</keyword>
<keyword id="KW-0732">Signal</keyword>
<keyword id="KW-0800">Toxin</keyword>
<comment type="function">
    <text evidence="1">Snake prothrombin activator that attacks the hemostatic system of prey. This protein is functionally similar to blood coagulation factor Xa (By similarity).</text>
</comment>
<comment type="catalytic activity">
    <reaction>
        <text>Selective cleavage of Arg-|-Thr and then Arg-|-Ile bonds in prothrombin to form thrombin.</text>
        <dbReference type="EC" id="3.4.21.6"/>
    </reaction>
</comment>
<comment type="subunit">
    <text evidence="1">Heterodimer of a light chain and a heavy chain; disulfide-linked.</text>
</comment>
<comment type="subcellular location">
    <subcellularLocation>
        <location evidence="6">Secreted</location>
    </subcellularLocation>
</comment>
<comment type="tissue specificity">
    <text evidence="6">Expressed by the venom gland.</text>
</comment>
<comment type="PTM">
    <text evidence="1">The vitamin K-dependent, enzymatic carboxylation of some glutamate residues allows the modified protein to bind calcium.</text>
</comment>
<comment type="miscellaneous">
    <text>Is classified in the group D of snake venom prothrombin activators, since it requires the mammalian factor Va for maximal activity for the cleavage of prothrombin.</text>
</comment>
<comment type="miscellaneous">
    <text>In contrast to blood coagulation factors that circulate as inactive zymogen in plasma, venom prothrombin activators are always found in the active form in the venom.</text>
</comment>
<comment type="similarity">
    <text evidence="4">Belongs to the peptidase S1 family. Snake venom subfamily.</text>
</comment>
<comment type="caution">
    <text evidence="7">Lacks the Cys residue in position 253 that is replaced by a Gly residue, resulting of a loss a disulfide bond. This may contribute to a probable lower procoagulant activity.</text>
</comment>
<feature type="signal peptide" evidence="2">
    <location>
        <begin position="1"/>
        <end position="20"/>
    </location>
</feature>
<feature type="propeptide" id="PRO_0000409897" evidence="1">
    <location>
        <begin position="21"/>
        <end position="40"/>
    </location>
</feature>
<feature type="chain" id="PRO_5000254112" description="Vestarin-D2 light chain">
    <location>
        <begin position="41"/>
        <end position="181"/>
    </location>
</feature>
<feature type="propeptide" id="PRO_0000409898" description="Activation peptide" evidence="1">
    <location>
        <begin position="182"/>
        <end position="226"/>
    </location>
</feature>
<feature type="chain" id="PRO_0000409899" description="Vestarin-D2 heavy chain">
    <location>
        <begin position="227"/>
        <end position="471"/>
    </location>
</feature>
<feature type="domain" description="Gla" evidence="5">
    <location>
        <begin position="41"/>
        <end position="86"/>
    </location>
</feature>
<feature type="domain" description="EGF-like 1; calcium-binding" evidence="3">
    <location>
        <begin position="86"/>
        <end position="122"/>
    </location>
</feature>
<feature type="domain" description="EGF-like 2" evidence="3">
    <location>
        <begin position="129"/>
        <end position="164"/>
    </location>
</feature>
<feature type="domain" description="Peptidase S1" evidence="4">
    <location>
        <begin position="227"/>
        <end position="458"/>
    </location>
</feature>
<feature type="active site" description="Charge relay system" evidence="1">
    <location>
        <position position="268"/>
    </location>
</feature>
<feature type="active site" description="Charge relay system" evidence="1">
    <location>
        <position position="313"/>
    </location>
</feature>
<feature type="active site" description="Charge relay system" evidence="1">
    <location>
        <position position="410"/>
    </location>
</feature>
<feature type="modified residue" description="4-carboxyglutamate" evidence="5">
    <location>
        <position position="46"/>
    </location>
</feature>
<feature type="modified residue" description="4-carboxyglutamate" evidence="5">
    <location>
        <position position="47"/>
    </location>
</feature>
<feature type="modified residue" description="4-carboxyglutamate" evidence="5">
    <location>
        <position position="54"/>
    </location>
</feature>
<feature type="modified residue" description="4-carboxyglutamate" evidence="5">
    <location>
        <position position="56"/>
    </location>
</feature>
<feature type="modified residue" description="4-carboxyglutamate" evidence="5">
    <location>
        <position position="59"/>
    </location>
</feature>
<feature type="modified residue" description="4-carboxyglutamate" evidence="5">
    <location>
        <position position="60"/>
    </location>
</feature>
<feature type="modified residue" description="4-carboxyglutamate" evidence="5">
    <location>
        <position position="65"/>
    </location>
</feature>
<feature type="modified residue" description="4-carboxyglutamate" evidence="5">
    <location>
        <position position="66"/>
    </location>
</feature>
<feature type="modified residue" description="4-carboxyglutamate" evidence="5">
    <location>
        <position position="69"/>
    </location>
</feature>
<feature type="modified residue" description="4-carboxyglutamate" evidence="5">
    <location>
        <position position="75"/>
    </location>
</feature>
<feature type="glycosylation site" description="O-linked (Hex...) serine" evidence="1">
    <location>
        <position position="92"/>
    </location>
</feature>
<feature type="glycosylation site" description="N-linked (GlcNAc...) asparagine" evidence="2">
    <location>
        <position position="271"/>
    </location>
</feature>
<feature type="disulfide bond" evidence="1">
    <location>
        <begin position="57"/>
        <end position="62"/>
    </location>
</feature>
<feature type="disulfide bond" evidence="1">
    <location>
        <begin position="90"/>
        <end position="101"/>
    </location>
</feature>
<feature type="disulfide bond" evidence="1">
    <location>
        <begin position="95"/>
        <end position="110"/>
    </location>
</feature>
<feature type="disulfide bond" evidence="1">
    <location>
        <begin position="112"/>
        <end position="121"/>
    </location>
</feature>
<feature type="disulfide bond" evidence="1">
    <location>
        <begin position="129"/>
        <end position="140"/>
    </location>
</feature>
<feature type="disulfide bond" evidence="1">
    <location>
        <begin position="136"/>
        <end position="149"/>
    </location>
</feature>
<feature type="disulfide bond" evidence="1">
    <location>
        <begin position="151"/>
        <end position="164"/>
    </location>
</feature>
<feature type="disulfide bond" description="Interchain (between light and heavy chains)" evidence="3 4 5">
    <location>
        <begin position="172"/>
        <end position="333"/>
    </location>
</feature>
<feature type="disulfide bond" evidence="1">
    <location>
        <begin position="233"/>
        <end position="238"/>
    </location>
</feature>
<feature type="disulfide bond" evidence="1">
    <location>
        <begin position="381"/>
        <end position="395"/>
    </location>
</feature>
<feature type="disulfide bond" evidence="1">
    <location>
        <begin position="406"/>
        <end position="434"/>
    </location>
</feature>